<sequence length="238" mass="27074">MQLPNLQSATLLRRYKRFLADVELNNGEILTLHCANTGAMTGCGEKGDTVWFSTSDSKTRKYPHSWELTQLKNGQTVCINTHRSNQLTLEALQNKIITELAEYDEILPEVKYGVENSRIDFLLKGKNLPDCYVEVKSVTFVKNHLGLFPDAVTTRGQKHLRELIAMKKRGHRAVVFFAGLHDGFNRFTVAKSIDPDYAELLQQAVKEGVEVYSYAVKFDFSHQKPTALYLTNLVNYLE</sequence>
<feature type="chain" id="PRO_1000007987" description="Sugar fermentation stimulation protein homolog">
    <location>
        <begin position="1"/>
        <end position="238"/>
    </location>
</feature>
<reference key="1">
    <citation type="journal article" date="2007" name="J. Bacteriol.">
        <title>Complete genome sequence of Haemophilus somnus (Histophilus somni) strain 129Pt and comparison to Haemophilus ducreyi 35000HP and Haemophilus influenzae Rd.</title>
        <authorList>
            <person name="Challacombe J.F."/>
            <person name="Duncan A.J."/>
            <person name="Brettin T.S."/>
            <person name="Bruce D."/>
            <person name="Chertkov O."/>
            <person name="Detter J.C."/>
            <person name="Han C.S."/>
            <person name="Misra M."/>
            <person name="Richardson P."/>
            <person name="Tapia R."/>
            <person name="Thayer N."/>
            <person name="Xie G."/>
            <person name="Inzana T.J."/>
        </authorList>
    </citation>
    <scope>NUCLEOTIDE SEQUENCE [LARGE SCALE GENOMIC DNA]</scope>
    <source>
        <strain>129Pt</strain>
    </source>
</reference>
<accession>Q0I1R2</accession>
<name>SFSA_HISS1</name>
<proteinExistence type="inferred from homology"/>
<protein>
    <recommendedName>
        <fullName evidence="1">Sugar fermentation stimulation protein homolog</fullName>
    </recommendedName>
</protein>
<gene>
    <name evidence="1" type="primary">sfsA</name>
    <name type="ordered locus">HS_0231</name>
</gene>
<dbReference type="EMBL" id="CP000436">
    <property type="protein sequence ID" value="ABI24509.1"/>
    <property type="molecule type" value="Genomic_DNA"/>
</dbReference>
<dbReference type="SMR" id="Q0I1R2"/>
<dbReference type="KEGG" id="hso:HS_0231"/>
<dbReference type="eggNOG" id="COG1489">
    <property type="taxonomic scope" value="Bacteria"/>
</dbReference>
<dbReference type="HOGENOM" id="CLU_052299_2_0_6"/>
<dbReference type="GO" id="GO:0003677">
    <property type="term" value="F:DNA binding"/>
    <property type="evidence" value="ECO:0007669"/>
    <property type="project" value="InterPro"/>
</dbReference>
<dbReference type="CDD" id="cd22359">
    <property type="entry name" value="SfsA-like_bacterial"/>
    <property type="match status" value="1"/>
</dbReference>
<dbReference type="FunFam" id="2.40.50.580:FF:000001">
    <property type="entry name" value="Sugar fermentation stimulation protein A"/>
    <property type="match status" value="1"/>
</dbReference>
<dbReference type="FunFam" id="3.40.1350.60:FF:000001">
    <property type="entry name" value="Sugar fermentation stimulation protein A"/>
    <property type="match status" value="1"/>
</dbReference>
<dbReference type="Gene3D" id="2.40.50.580">
    <property type="match status" value="1"/>
</dbReference>
<dbReference type="Gene3D" id="3.40.1350.60">
    <property type="match status" value="1"/>
</dbReference>
<dbReference type="HAMAP" id="MF_00095">
    <property type="entry name" value="SfsA"/>
    <property type="match status" value="1"/>
</dbReference>
<dbReference type="InterPro" id="IPR005224">
    <property type="entry name" value="SfsA"/>
</dbReference>
<dbReference type="InterPro" id="IPR040452">
    <property type="entry name" value="SfsA_C"/>
</dbReference>
<dbReference type="InterPro" id="IPR041465">
    <property type="entry name" value="SfsA_N"/>
</dbReference>
<dbReference type="NCBIfam" id="TIGR00230">
    <property type="entry name" value="sfsA"/>
    <property type="match status" value="1"/>
</dbReference>
<dbReference type="PANTHER" id="PTHR30545">
    <property type="entry name" value="SUGAR FERMENTATION STIMULATION PROTEIN A"/>
    <property type="match status" value="1"/>
</dbReference>
<dbReference type="PANTHER" id="PTHR30545:SF2">
    <property type="entry name" value="SUGAR FERMENTATION STIMULATION PROTEIN A"/>
    <property type="match status" value="1"/>
</dbReference>
<dbReference type="Pfam" id="PF03749">
    <property type="entry name" value="SfsA"/>
    <property type="match status" value="1"/>
</dbReference>
<dbReference type="Pfam" id="PF17746">
    <property type="entry name" value="SfsA_N"/>
    <property type="match status" value="1"/>
</dbReference>
<organism>
    <name type="scientific">Histophilus somni (strain 129Pt)</name>
    <name type="common">Haemophilus somnus</name>
    <dbReference type="NCBI Taxonomy" id="205914"/>
    <lineage>
        <taxon>Bacteria</taxon>
        <taxon>Pseudomonadati</taxon>
        <taxon>Pseudomonadota</taxon>
        <taxon>Gammaproteobacteria</taxon>
        <taxon>Pasteurellales</taxon>
        <taxon>Pasteurellaceae</taxon>
        <taxon>Histophilus</taxon>
    </lineage>
</organism>
<evidence type="ECO:0000255" key="1">
    <source>
        <dbReference type="HAMAP-Rule" id="MF_00095"/>
    </source>
</evidence>
<comment type="similarity">
    <text evidence="1">Belongs to the SfsA family.</text>
</comment>